<dbReference type="EC" id="2.3.1.191" evidence="1"/>
<dbReference type="EMBL" id="CR378672">
    <property type="protein sequence ID" value="CAG21292.1"/>
    <property type="molecule type" value="Genomic_DNA"/>
</dbReference>
<dbReference type="RefSeq" id="WP_011219559.1">
    <property type="nucleotide sequence ID" value="NC_006370.1"/>
</dbReference>
<dbReference type="SMR" id="Q6LN34"/>
<dbReference type="STRING" id="298386.PBPRA2958"/>
<dbReference type="KEGG" id="ppr:PBPRA2958"/>
<dbReference type="eggNOG" id="COG1044">
    <property type="taxonomic scope" value="Bacteria"/>
</dbReference>
<dbReference type="HOGENOM" id="CLU_049865_0_1_6"/>
<dbReference type="UniPathway" id="UPA00973"/>
<dbReference type="Proteomes" id="UP000000593">
    <property type="component" value="Chromosome 1"/>
</dbReference>
<dbReference type="GO" id="GO:0016020">
    <property type="term" value="C:membrane"/>
    <property type="evidence" value="ECO:0007669"/>
    <property type="project" value="GOC"/>
</dbReference>
<dbReference type="GO" id="GO:0016410">
    <property type="term" value="F:N-acyltransferase activity"/>
    <property type="evidence" value="ECO:0007669"/>
    <property type="project" value="InterPro"/>
</dbReference>
<dbReference type="GO" id="GO:0009245">
    <property type="term" value="P:lipid A biosynthetic process"/>
    <property type="evidence" value="ECO:0007669"/>
    <property type="project" value="UniProtKB-UniRule"/>
</dbReference>
<dbReference type="CDD" id="cd03352">
    <property type="entry name" value="LbH_LpxD"/>
    <property type="match status" value="1"/>
</dbReference>
<dbReference type="FunFam" id="2.160.10.10:FF:000005">
    <property type="entry name" value="UDP-3-O-(3-hydroxymyristoyl)glucosamine N-acyltransferase"/>
    <property type="match status" value="1"/>
</dbReference>
<dbReference type="Gene3D" id="1.20.5.170">
    <property type="match status" value="1"/>
</dbReference>
<dbReference type="Gene3D" id="2.160.10.10">
    <property type="entry name" value="Hexapeptide repeat proteins"/>
    <property type="match status" value="1"/>
</dbReference>
<dbReference type="Gene3D" id="3.40.1390.10">
    <property type="entry name" value="MurE/MurF, N-terminal domain"/>
    <property type="match status" value="1"/>
</dbReference>
<dbReference type="HAMAP" id="MF_00523">
    <property type="entry name" value="LpxD"/>
    <property type="match status" value="1"/>
</dbReference>
<dbReference type="InterPro" id="IPR001451">
    <property type="entry name" value="Hexapep"/>
</dbReference>
<dbReference type="InterPro" id="IPR018357">
    <property type="entry name" value="Hexapep_transf_CS"/>
</dbReference>
<dbReference type="InterPro" id="IPR007691">
    <property type="entry name" value="LpxD"/>
</dbReference>
<dbReference type="InterPro" id="IPR011004">
    <property type="entry name" value="Trimer_LpxA-like_sf"/>
</dbReference>
<dbReference type="InterPro" id="IPR020573">
    <property type="entry name" value="UDP_GlcNAc_AcTrfase_non-rep"/>
</dbReference>
<dbReference type="NCBIfam" id="TIGR01853">
    <property type="entry name" value="lipid_A_lpxD"/>
    <property type="match status" value="1"/>
</dbReference>
<dbReference type="NCBIfam" id="NF002060">
    <property type="entry name" value="PRK00892.1"/>
    <property type="match status" value="1"/>
</dbReference>
<dbReference type="PANTHER" id="PTHR43378">
    <property type="entry name" value="UDP-3-O-ACYLGLUCOSAMINE N-ACYLTRANSFERASE"/>
    <property type="match status" value="1"/>
</dbReference>
<dbReference type="PANTHER" id="PTHR43378:SF2">
    <property type="entry name" value="UDP-3-O-ACYLGLUCOSAMINE N-ACYLTRANSFERASE 1, MITOCHONDRIAL-RELATED"/>
    <property type="match status" value="1"/>
</dbReference>
<dbReference type="Pfam" id="PF00132">
    <property type="entry name" value="Hexapep"/>
    <property type="match status" value="1"/>
</dbReference>
<dbReference type="Pfam" id="PF14602">
    <property type="entry name" value="Hexapep_2"/>
    <property type="match status" value="2"/>
</dbReference>
<dbReference type="Pfam" id="PF04613">
    <property type="entry name" value="LpxD"/>
    <property type="match status" value="1"/>
</dbReference>
<dbReference type="SUPFAM" id="SSF51161">
    <property type="entry name" value="Trimeric LpxA-like enzymes"/>
    <property type="match status" value="1"/>
</dbReference>
<dbReference type="PROSITE" id="PS00101">
    <property type="entry name" value="HEXAPEP_TRANSFERASES"/>
    <property type="match status" value="2"/>
</dbReference>
<proteinExistence type="inferred from homology"/>
<gene>
    <name evidence="1" type="primary">lpxD</name>
    <name type="ordered locus">PBPRA2958</name>
</gene>
<accession>Q6LN34</accession>
<reference key="1">
    <citation type="journal article" date="2005" name="Science">
        <title>Life at depth: Photobacterium profundum genome sequence and expression analysis.</title>
        <authorList>
            <person name="Vezzi A."/>
            <person name="Campanaro S."/>
            <person name="D'Angelo M."/>
            <person name="Simonato F."/>
            <person name="Vitulo N."/>
            <person name="Lauro F.M."/>
            <person name="Cestaro A."/>
            <person name="Malacrida G."/>
            <person name="Simionati B."/>
            <person name="Cannata N."/>
            <person name="Romualdi C."/>
            <person name="Bartlett D.H."/>
            <person name="Valle G."/>
        </authorList>
    </citation>
    <scope>NUCLEOTIDE SEQUENCE [LARGE SCALE GENOMIC DNA]</scope>
    <source>
        <strain>ATCC BAA-1253 / SS9</strain>
    </source>
</reference>
<organism>
    <name type="scientific">Photobacterium profundum (strain SS9)</name>
    <dbReference type="NCBI Taxonomy" id="298386"/>
    <lineage>
        <taxon>Bacteria</taxon>
        <taxon>Pseudomonadati</taxon>
        <taxon>Pseudomonadota</taxon>
        <taxon>Gammaproteobacteria</taxon>
        <taxon>Vibrionales</taxon>
        <taxon>Vibrionaceae</taxon>
        <taxon>Photobacterium</taxon>
    </lineage>
</organism>
<name>LPXD_PHOPR</name>
<keyword id="KW-0012">Acyltransferase</keyword>
<keyword id="KW-0441">Lipid A biosynthesis</keyword>
<keyword id="KW-0444">Lipid biosynthesis</keyword>
<keyword id="KW-0443">Lipid metabolism</keyword>
<keyword id="KW-1185">Reference proteome</keyword>
<keyword id="KW-0677">Repeat</keyword>
<keyword id="KW-0808">Transferase</keyword>
<comment type="function">
    <text evidence="1">Catalyzes the N-acylation of UDP-3-O-acylglucosamine using 3-hydroxyacyl-ACP as the acyl donor. Is involved in the biosynthesis of lipid A, a phosphorylated glycolipid that anchors the lipopolysaccharide to the outer membrane of the cell.</text>
</comment>
<comment type="catalytic activity">
    <reaction evidence="1">
        <text>a UDP-3-O-[(3R)-3-hydroxyacyl]-alpha-D-glucosamine + a (3R)-hydroxyacyl-[ACP] = a UDP-2-N,3-O-bis[(3R)-3-hydroxyacyl]-alpha-D-glucosamine + holo-[ACP] + H(+)</text>
        <dbReference type="Rhea" id="RHEA:53836"/>
        <dbReference type="Rhea" id="RHEA-COMP:9685"/>
        <dbReference type="Rhea" id="RHEA-COMP:9945"/>
        <dbReference type="ChEBI" id="CHEBI:15378"/>
        <dbReference type="ChEBI" id="CHEBI:64479"/>
        <dbReference type="ChEBI" id="CHEBI:78827"/>
        <dbReference type="ChEBI" id="CHEBI:137740"/>
        <dbReference type="ChEBI" id="CHEBI:137748"/>
        <dbReference type="EC" id="2.3.1.191"/>
    </reaction>
</comment>
<comment type="pathway">
    <text evidence="1">Bacterial outer membrane biogenesis; LPS lipid A biosynthesis.</text>
</comment>
<comment type="subunit">
    <text evidence="1">Homotrimer.</text>
</comment>
<comment type="similarity">
    <text evidence="1">Belongs to the transferase hexapeptide repeat family. LpxD subfamily.</text>
</comment>
<feature type="chain" id="PRO_0000059688" description="UDP-3-O-acylglucosamine N-acyltransferase">
    <location>
        <begin position="1"/>
        <end position="341"/>
    </location>
</feature>
<feature type="active site" description="Proton acceptor" evidence="1">
    <location>
        <position position="239"/>
    </location>
</feature>
<evidence type="ECO:0000255" key="1">
    <source>
        <dbReference type="HAMAP-Rule" id="MF_00523"/>
    </source>
</evidence>
<protein>
    <recommendedName>
        <fullName evidence="1">UDP-3-O-acylglucosamine N-acyltransferase</fullName>
        <ecNumber evidence="1">2.3.1.191</ecNumber>
    </recommendedName>
</protein>
<sequence length="341" mass="35593">MARITLAEIADKLGAELRGDGSVEIQSIAGMEKAAEGQITFLSASKYRKHLAECQASAVMLKEADLPFFDGNALVLKDPYLGYALLAQLLDTTPKSASNIAPSAYIADDAIIGEGAAIGHNAVIESGAQIGANVQIGAGCFIGQNAVIGAGSKVWANVSIYHSVTLGSDCLVQSGAVIGSDGFGYANDRGKWVKIPQLGSVHVGNNVEIGACTTIDRGALDDTVIADGVIIDNHCQIAHNVSIGENTAIAGATTMAGSLKIGKHCFIGGATVINGHIEITDGVTITGMGMVMRPISEPGVYSSGIPLQTNREWRKTAARVMKIEEMNKRLKSVEKKLNESN</sequence>